<gene>
    <name evidence="1" type="primary">ihfB</name>
    <name evidence="1" type="synonym">himD</name>
    <name type="ordered locus">Sbal223_2067</name>
</gene>
<dbReference type="EMBL" id="CP001252">
    <property type="protein sequence ID" value="ACK46571.1"/>
    <property type="molecule type" value="Genomic_DNA"/>
</dbReference>
<dbReference type="RefSeq" id="WP_006081718.1">
    <property type="nucleotide sequence ID" value="NC_011663.1"/>
</dbReference>
<dbReference type="SMR" id="B8EA98"/>
<dbReference type="GeneID" id="11772512"/>
<dbReference type="KEGG" id="sbp:Sbal223_2067"/>
<dbReference type="HOGENOM" id="CLU_105066_2_0_6"/>
<dbReference type="Proteomes" id="UP000002507">
    <property type="component" value="Chromosome"/>
</dbReference>
<dbReference type="GO" id="GO:0005694">
    <property type="term" value="C:chromosome"/>
    <property type="evidence" value="ECO:0007669"/>
    <property type="project" value="InterPro"/>
</dbReference>
<dbReference type="GO" id="GO:0005829">
    <property type="term" value="C:cytosol"/>
    <property type="evidence" value="ECO:0007669"/>
    <property type="project" value="TreeGrafter"/>
</dbReference>
<dbReference type="GO" id="GO:0003677">
    <property type="term" value="F:DNA binding"/>
    <property type="evidence" value="ECO:0007669"/>
    <property type="project" value="UniProtKB-UniRule"/>
</dbReference>
<dbReference type="GO" id="GO:0030527">
    <property type="term" value="F:structural constituent of chromatin"/>
    <property type="evidence" value="ECO:0007669"/>
    <property type="project" value="InterPro"/>
</dbReference>
<dbReference type="GO" id="GO:0006310">
    <property type="term" value="P:DNA recombination"/>
    <property type="evidence" value="ECO:0007669"/>
    <property type="project" value="UniProtKB-UniRule"/>
</dbReference>
<dbReference type="GO" id="GO:0006355">
    <property type="term" value="P:regulation of DNA-templated transcription"/>
    <property type="evidence" value="ECO:0007669"/>
    <property type="project" value="UniProtKB-UniRule"/>
</dbReference>
<dbReference type="GO" id="GO:0006417">
    <property type="term" value="P:regulation of translation"/>
    <property type="evidence" value="ECO:0007669"/>
    <property type="project" value="UniProtKB-UniRule"/>
</dbReference>
<dbReference type="CDD" id="cd13836">
    <property type="entry name" value="IHF_B"/>
    <property type="match status" value="1"/>
</dbReference>
<dbReference type="FunFam" id="4.10.520.10:FF:000003">
    <property type="entry name" value="Integration host factor subunit beta"/>
    <property type="match status" value="1"/>
</dbReference>
<dbReference type="Gene3D" id="4.10.520.10">
    <property type="entry name" value="IHF-like DNA-binding proteins"/>
    <property type="match status" value="1"/>
</dbReference>
<dbReference type="HAMAP" id="MF_00381">
    <property type="entry name" value="IHF_beta"/>
    <property type="match status" value="1"/>
</dbReference>
<dbReference type="InterPro" id="IPR000119">
    <property type="entry name" value="Hist_DNA-bd"/>
</dbReference>
<dbReference type="InterPro" id="IPR020816">
    <property type="entry name" value="Histone-like_DNA-bd_CS"/>
</dbReference>
<dbReference type="InterPro" id="IPR010992">
    <property type="entry name" value="IHF-like_DNA-bd_dom_sf"/>
</dbReference>
<dbReference type="InterPro" id="IPR005685">
    <property type="entry name" value="IHF_beta"/>
</dbReference>
<dbReference type="NCBIfam" id="TIGR00988">
    <property type="entry name" value="hip"/>
    <property type="match status" value="1"/>
</dbReference>
<dbReference type="NCBIfam" id="NF001222">
    <property type="entry name" value="PRK00199.1"/>
    <property type="match status" value="1"/>
</dbReference>
<dbReference type="PANTHER" id="PTHR33175">
    <property type="entry name" value="DNA-BINDING PROTEIN HU"/>
    <property type="match status" value="1"/>
</dbReference>
<dbReference type="PANTHER" id="PTHR33175:SF5">
    <property type="entry name" value="INTEGRATION HOST FACTOR SUBUNIT BETA"/>
    <property type="match status" value="1"/>
</dbReference>
<dbReference type="Pfam" id="PF00216">
    <property type="entry name" value="Bac_DNA_binding"/>
    <property type="match status" value="1"/>
</dbReference>
<dbReference type="PRINTS" id="PR01727">
    <property type="entry name" value="DNABINDINGHU"/>
</dbReference>
<dbReference type="SMART" id="SM00411">
    <property type="entry name" value="BHL"/>
    <property type="match status" value="1"/>
</dbReference>
<dbReference type="SUPFAM" id="SSF47729">
    <property type="entry name" value="IHF-like DNA-binding proteins"/>
    <property type="match status" value="1"/>
</dbReference>
<dbReference type="PROSITE" id="PS00045">
    <property type="entry name" value="HISTONE_LIKE"/>
    <property type="match status" value="1"/>
</dbReference>
<evidence type="ECO:0000255" key="1">
    <source>
        <dbReference type="HAMAP-Rule" id="MF_00381"/>
    </source>
</evidence>
<evidence type="ECO:0000256" key="2">
    <source>
        <dbReference type="SAM" id="MobiDB-lite"/>
    </source>
</evidence>
<feature type="chain" id="PRO_1000190448" description="Integration host factor subunit beta">
    <location>
        <begin position="1"/>
        <end position="95"/>
    </location>
</feature>
<feature type="region of interest" description="Disordered" evidence="2">
    <location>
        <begin position="56"/>
        <end position="76"/>
    </location>
</feature>
<name>IHFB_SHEB2</name>
<reference key="1">
    <citation type="submission" date="2008-12" db="EMBL/GenBank/DDBJ databases">
        <title>Complete sequence of chromosome of Shewanella baltica OS223.</title>
        <authorList>
            <consortium name="US DOE Joint Genome Institute"/>
            <person name="Lucas S."/>
            <person name="Copeland A."/>
            <person name="Lapidus A."/>
            <person name="Glavina del Rio T."/>
            <person name="Dalin E."/>
            <person name="Tice H."/>
            <person name="Bruce D."/>
            <person name="Goodwin L."/>
            <person name="Pitluck S."/>
            <person name="Chertkov O."/>
            <person name="Meincke L."/>
            <person name="Brettin T."/>
            <person name="Detter J.C."/>
            <person name="Han C."/>
            <person name="Kuske C.R."/>
            <person name="Larimer F."/>
            <person name="Land M."/>
            <person name="Hauser L."/>
            <person name="Kyrpides N."/>
            <person name="Ovchinnikova G."/>
            <person name="Brettar I."/>
            <person name="Rodrigues J."/>
            <person name="Konstantinidis K."/>
            <person name="Tiedje J."/>
        </authorList>
    </citation>
    <scope>NUCLEOTIDE SEQUENCE [LARGE SCALE GENOMIC DNA]</scope>
    <source>
        <strain>OS223</strain>
    </source>
</reference>
<accession>B8EA98</accession>
<protein>
    <recommendedName>
        <fullName evidence="1">Integration host factor subunit beta</fullName>
        <shortName evidence="1">IHF-beta</shortName>
    </recommendedName>
</protein>
<comment type="function">
    <text evidence="1">This protein is one of the two subunits of integration host factor, a specific DNA-binding protein that functions in genetic recombination as well as in transcriptional and translational control.</text>
</comment>
<comment type="subunit">
    <text evidence="1">Heterodimer of an alpha and a beta chain.</text>
</comment>
<comment type="similarity">
    <text evidence="1">Belongs to the bacterial histone-like protein family.</text>
</comment>
<organism>
    <name type="scientific">Shewanella baltica (strain OS223)</name>
    <dbReference type="NCBI Taxonomy" id="407976"/>
    <lineage>
        <taxon>Bacteria</taxon>
        <taxon>Pseudomonadati</taxon>
        <taxon>Pseudomonadota</taxon>
        <taxon>Gammaproteobacteria</taxon>
        <taxon>Alteromonadales</taxon>
        <taxon>Shewanellaceae</taxon>
        <taxon>Shewanella</taxon>
    </lineage>
</organism>
<proteinExistence type="inferred from homology"/>
<keyword id="KW-0233">DNA recombination</keyword>
<keyword id="KW-0238">DNA-binding</keyword>
<keyword id="KW-0804">Transcription</keyword>
<keyword id="KW-0805">Transcription regulation</keyword>
<keyword id="KW-0810">Translation regulation</keyword>
<sequence length="95" mass="10634">MTKSELIEKLATRQSQLSAKEVEGAIKEMLEQMATTLESGDRIEIRGFGSFSLHYRAPRTGRNPKTGSSVDLEGKYVPHFKPGKELRERVDAVNV</sequence>